<feature type="chain" id="PRO_1000144653" description="Large ribosomal subunit protein uL30">
    <location>
        <begin position="1"/>
        <end position="61"/>
    </location>
</feature>
<protein>
    <recommendedName>
        <fullName evidence="1">Large ribosomal subunit protein uL30</fullName>
    </recommendedName>
    <alternativeName>
        <fullName evidence="2">50S ribosomal protein L30</fullName>
    </alternativeName>
</protein>
<organism>
    <name type="scientific">Bordetella petrii (strain ATCC BAA-461 / DSM 12804 / CCUG 43448)</name>
    <dbReference type="NCBI Taxonomy" id="340100"/>
    <lineage>
        <taxon>Bacteria</taxon>
        <taxon>Pseudomonadati</taxon>
        <taxon>Pseudomonadota</taxon>
        <taxon>Betaproteobacteria</taxon>
        <taxon>Burkholderiales</taxon>
        <taxon>Alcaligenaceae</taxon>
        <taxon>Bordetella</taxon>
    </lineage>
</organism>
<reference key="1">
    <citation type="journal article" date="2008" name="BMC Genomics">
        <title>The missing link: Bordetella petrii is endowed with both the metabolic versatility of environmental bacteria and virulence traits of pathogenic Bordetellae.</title>
        <authorList>
            <person name="Gross R."/>
            <person name="Guzman C.A."/>
            <person name="Sebaihia M."/>
            <person name="Martin dos Santos V.A.P."/>
            <person name="Pieper D.H."/>
            <person name="Koebnik R."/>
            <person name="Lechner M."/>
            <person name="Bartels D."/>
            <person name="Buhrmester J."/>
            <person name="Choudhuri J.V."/>
            <person name="Ebensen T."/>
            <person name="Gaigalat L."/>
            <person name="Herrmann S."/>
            <person name="Khachane A.N."/>
            <person name="Larisch C."/>
            <person name="Link S."/>
            <person name="Linke B."/>
            <person name="Meyer F."/>
            <person name="Mormann S."/>
            <person name="Nakunst D."/>
            <person name="Rueckert C."/>
            <person name="Schneiker-Bekel S."/>
            <person name="Schulze K."/>
            <person name="Voerholter F.-J."/>
            <person name="Yevsa T."/>
            <person name="Engle J.T."/>
            <person name="Goldman W.E."/>
            <person name="Puehler A."/>
            <person name="Goebel U.B."/>
            <person name="Goesmann A."/>
            <person name="Bloecker H."/>
            <person name="Kaiser O."/>
            <person name="Martinez-Arias R."/>
        </authorList>
    </citation>
    <scope>NUCLEOTIDE SEQUENCE [LARGE SCALE GENOMIC DNA]</scope>
    <source>
        <strain>ATCC BAA-461 / DSM 12804 / CCUG 43448</strain>
    </source>
</reference>
<accession>A9IHS8</accession>
<name>RL30_BORPD</name>
<keyword id="KW-0687">Ribonucleoprotein</keyword>
<keyword id="KW-0689">Ribosomal protein</keyword>
<proteinExistence type="inferred from homology"/>
<sequence length="61" mass="6849">MAQKQIKVTLVRSVIGTKQSHRDTVRGLGLRRINSSRVLVDTPEVRGMIRKVDYLVSVSEA</sequence>
<dbReference type="EMBL" id="AM902716">
    <property type="protein sequence ID" value="CAP45284.1"/>
    <property type="molecule type" value="Genomic_DNA"/>
</dbReference>
<dbReference type="SMR" id="A9IHS8"/>
<dbReference type="STRING" id="94624.Bpet4932"/>
<dbReference type="KEGG" id="bpt:Bpet4932"/>
<dbReference type="eggNOG" id="COG1841">
    <property type="taxonomic scope" value="Bacteria"/>
</dbReference>
<dbReference type="Proteomes" id="UP000001225">
    <property type="component" value="Chromosome"/>
</dbReference>
<dbReference type="GO" id="GO:0022625">
    <property type="term" value="C:cytosolic large ribosomal subunit"/>
    <property type="evidence" value="ECO:0007669"/>
    <property type="project" value="TreeGrafter"/>
</dbReference>
<dbReference type="GO" id="GO:0003735">
    <property type="term" value="F:structural constituent of ribosome"/>
    <property type="evidence" value="ECO:0007669"/>
    <property type="project" value="InterPro"/>
</dbReference>
<dbReference type="GO" id="GO:0006412">
    <property type="term" value="P:translation"/>
    <property type="evidence" value="ECO:0007669"/>
    <property type="project" value="UniProtKB-UniRule"/>
</dbReference>
<dbReference type="CDD" id="cd01658">
    <property type="entry name" value="Ribosomal_L30"/>
    <property type="match status" value="1"/>
</dbReference>
<dbReference type="FunFam" id="3.30.1390.20:FF:000001">
    <property type="entry name" value="50S ribosomal protein L30"/>
    <property type="match status" value="1"/>
</dbReference>
<dbReference type="Gene3D" id="3.30.1390.20">
    <property type="entry name" value="Ribosomal protein L30, ferredoxin-like fold domain"/>
    <property type="match status" value="1"/>
</dbReference>
<dbReference type="HAMAP" id="MF_01371_B">
    <property type="entry name" value="Ribosomal_uL30_B"/>
    <property type="match status" value="1"/>
</dbReference>
<dbReference type="InterPro" id="IPR036919">
    <property type="entry name" value="Ribo_uL30_ferredoxin-like_sf"/>
</dbReference>
<dbReference type="InterPro" id="IPR005996">
    <property type="entry name" value="Ribosomal_uL30_bac-type"/>
</dbReference>
<dbReference type="InterPro" id="IPR018038">
    <property type="entry name" value="Ribosomal_uL30_CS"/>
</dbReference>
<dbReference type="InterPro" id="IPR016082">
    <property type="entry name" value="Ribosomal_uL30_ferredoxin-like"/>
</dbReference>
<dbReference type="NCBIfam" id="TIGR01308">
    <property type="entry name" value="rpmD_bact"/>
    <property type="match status" value="1"/>
</dbReference>
<dbReference type="PANTHER" id="PTHR15892:SF2">
    <property type="entry name" value="LARGE RIBOSOMAL SUBUNIT PROTEIN UL30M"/>
    <property type="match status" value="1"/>
</dbReference>
<dbReference type="PANTHER" id="PTHR15892">
    <property type="entry name" value="MITOCHONDRIAL RIBOSOMAL PROTEIN L30"/>
    <property type="match status" value="1"/>
</dbReference>
<dbReference type="Pfam" id="PF00327">
    <property type="entry name" value="Ribosomal_L30"/>
    <property type="match status" value="1"/>
</dbReference>
<dbReference type="PIRSF" id="PIRSF002211">
    <property type="entry name" value="Ribosomal_L30_bac-type"/>
    <property type="match status" value="1"/>
</dbReference>
<dbReference type="SUPFAM" id="SSF55129">
    <property type="entry name" value="Ribosomal protein L30p/L7e"/>
    <property type="match status" value="1"/>
</dbReference>
<dbReference type="PROSITE" id="PS00634">
    <property type="entry name" value="RIBOSOMAL_L30"/>
    <property type="match status" value="1"/>
</dbReference>
<evidence type="ECO:0000255" key="1">
    <source>
        <dbReference type="HAMAP-Rule" id="MF_01371"/>
    </source>
</evidence>
<evidence type="ECO:0000305" key="2"/>
<comment type="subunit">
    <text evidence="1">Part of the 50S ribosomal subunit.</text>
</comment>
<comment type="similarity">
    <text evidence="1">Belongs to the universal ribosomal protein uL30 family.</text>
</comment>
<gene>
    <name evidence="1" type="primary">rpmD</name>
    <name type="ordered locus">Bpet4932</name>
</gene>